<name>RR6_SPIOL</name>
<keyword id="KW-0002">3D-structure</keyword>
<keyword id="KW-0150">Chloroplast</keyword>
<keyword id="KW-0903">Direct protein sequencing</keyword>
<keyword id="KW-0934">Plastid</keyword>
<keyword id="KW-1185">Reference proteome</keyword>
<keyword id="KW-0687">Ribonucleoprotein</keyword>
<keyword id="KW-0689">Ribosomal protein</keyword>
<keyword id="KW-0694">RNA-binding</keyword>
<keyword id="KW-0699">rRNA-binding</keyword>
<keyword id="KW-0809">Transit peptide</keyword>
<sequence>MATFSLTSTLPSSSPTTSLHSIPKPKLKPSTINFTHNLNPFNPNLKPSRHHYLSNYGPYVKAIALDFSGSFFEGGFGGLDEDPPSTPPAGLAVEEKPEPQCPPGLRQYETMAVLRPDMTEDERLTLTQKYEELLVAGGAMYVEVFNRGVIPLAYSIKRKNKAGETNNYLDGIYLLFTYFTKPESISPLEAALVTDDDVIRSSSFKIRKRKY</sequence>
<evidence type="ECO:0000256" key="1">
    <source>
        <dbReference type="SAM" id="MobiDB-lite"/>
    </source>
</evidence>
<evidence type="ECO:0000269" key="2">
    <source>
    </source>
</evidence>
<evidence type="ECO:0000269" key="3">
    <source>
    </source>
</evidence>
<evidence type="ECO:0000303" key="4">
    <source>
    </source>
</evidence>
<evidence type="ECO:0000303" key="5">
    <source>
    </source>
</evidence>
<evidence type="ECO:0000305" key="6"/>
<evidence type="ECO:0000305" key="7">
    <source>
    </source>
</evidence>
<evidence type="ECO:0000305" key="8">
    <source>
    </source>
</evidence>
<dbReference type="EMBL" id="KQ154025">
    <property type="protein sequence ID" value="KNA13015.1"/>
    <property type="molecule type" value="Genomic_DNA"/>
</dbReference>
<dbReference type="EMBL" id="AF250383">
    <property type="protein sequence ID" value="AAF64311.1"/>
    <property type="molecule type" value="mRNA"/>
</dbReference>
<dbReference type="PDB" id="4V61">
    <property type="method" value="EM"/>
    <property type="resolution" value="9.40 A"/>
    <property type="chains" value="AF=44-211"/>
</dbReference>
<dbReference type="PDB" id="5MMJ">
    <property type="method" value="EM"/>
    <property type="resolution" value="3.65 A"/>
    <property type="chains" value="f=1-211"/>
</dbReference>
<dbReference type="PDB" id="5MMM">
    <property type="method" value="EM"/>
    <property type="resolution" value="3.40 A"/>
    <property type="chains" value="f=1-211"/>
</dbReference>
<dbReference type="PDB" id="5X8P">
    <property type="method" value="EM"/>
    <property type="resolution" value="3.40 A"/>
    <property type="chains" value="f=66-211"/>
</dbReference>
<dbReference type="PDB" id="5X8R">
    <property type="method" value="EM"/>
    <property type="resolution" value="3.70 A"/>
    <property type="chains" value="f=66-211"/>
</dbReference>
<dbReference type="PDB" id="6ERI">
    <property type="method" value="EM"/>
    <property type="resolution" value="3.00 A"/>
    <property type="chains" value="BF=99-211"/>
</dbReference>
<dbReference type="PDBsum" id="4V61"/>
<dbReference type="PDBsum" id="5MMJ"/>
<dbReference type="PDBsum" id="5MMM"/>
<dbReference type="PDBsum" id="5X8P"/>
<dbReference type="PDBsum" id="5X8R"/>
<dbReference type="PDBsum" id="6ERI"/>
<dbReference type="EMDB" id="EMD-3532"/>
<dbReference type="EMDB" id="EMD-3533"/>
<dbReference type="EMDB" id="EMD-3941"/>
<dbReference type="EMDB" id="EMD-6709"/>
<dbReference type="EMDB" id="EMD-6710"/>
<dbReference type="SMR" id="P82403"/>
<dbReference type="STRING" id="3562.P82403"/>
<dbReference type="OrthoDB" id="2014413at2759"/>
<dbReference type="Proteomes" id="UP001155700">
    <property type="component" value="Unplaced"/>
</dbReference>
<dbReference type="GO" id="GO:0009507">
    <property type="term" value="C:chloroplast"/>
    <property type="evidence" value="ECO:0007669"/>
    <property type="project" value="UniProtKB-SubCell"/>
</dbReference>
<dbReference type="GO" id="GO:1990904">
    <property type="term" value="C:ribonucleoprotein complex"/>
    <property type="evidence" value="ECO:0007669"/>
    <property type="project" value="UniProtKB-KW"/>
</dbReference>
<dbReference type="GO" id="GO:0005840">
    <property type="term" value="C:ribosome"/>
    <property type="evidence" value="ECO:0007669"/>
    <property type="project" value="UniProtKB-KW"/>
</dbReference>
<dbReference type="GO" id="GO:0070181">
    <property type="term" value="F:small ribosomal subunit rRNA binding"/>
    <property type="evidence" value="ECO:0000318"/>
    <property type="project" value="GO_Central"/>
</dbReference>
<dbReference type="GO" id="GO:0003735">
    <property type="term" value="F:structural constituent of ribosome"/>
    <property type="evidence" value="ECO:0000318"/>
    <property type="project" value="GO_Central"/>
</dbReference>
<dbReference type="GO" id="GO:0006412">
    <property type="term" value="P:translation"/>
    <property type="evidence" value="ECO:0007669"/>
    <property type="project" value="InterPro"/>
</dbReference>
<dbReference type="CDD" id="cd15487">
    <property type="entry name" value="bS6_chloro_cyano"/>
    <property type="match status" value="1"/>
</dbReference>
<dbReference type="FunFam" id="3.30.70.60:FF:000006">
    <property type="entry name" value="30S ribosomal protein S6 alpha, chloroplastic"/>
    <property type="match status" value="1"/>
</dbReference>
<dbReference type="Gene3D" id="3.30.70.60">
    <property type="match status" value="1"/>
</dbReference>
<dbReference type="HAMAP" id="MF_00360">
    <property type="entry name" value="Ribosomal_bS6"/>
    <property type="match status" value="1"/>
</dbReference>
<dbReference type="InterPro" id="IPR000529">
    <property type="entry name" value="Ribosomal_bS6"/>
</dbReference>
<dbReference type="InterPro" id="IPR035980">
    <property type="entry name" value="Ribosomal_bS6_sf"/>
</dbReference>
<dbReference type="InterPro" id="IPR020814">
    <property type="entry name" value="Ribosomal_S6_plastid/chlpt"/>
</dbReference>
<dbReference type="InterPro" id="IPR014717">
    <property type="entry name" value="Transl_elong_EF1B/ribsomal_bS6"/>
</dbReference>
<dbReference type="PANTHER" id="PTHR21011">
    <property type="entry name" value="MITOCHONDRIAL 28S RIBOSOMAL PROTEIN S6"/>
    <property type="match status" value="1"/>
</dbReference>
<dbReference type="PANTHER" id="PTHR21011:SF16">
    <property type="entry name" value="SMALL RIBOSOMAL SUBUNIT PROTEIN BS6C ALPHA"/>
    <property type="match status" value="1"/>
</dbReference>
<dbReference type="Pfam" id="PF01250">
    <property type="entry name" value="Ribosomal_S6"/>
    <property type="match status" value="1"/>
</dbReference>
<dbReference type="SUPFAM" id="SSF54995">
    <property type="entry name" value="Ribosomal protein S6"/>
    <property type="match status" value="1"/>
</dbReference>
<reference key="1">
    <citation type="journal article" date="2014" name="Nature">
        <title>The genome of the recently domesticated crop plant sugar beet (Beta vulgaris).</title>
        <authorList>
            <person name="Dohm J.C."/>
            <person name="Minoche A.E."/>
            <person name="Holtgraewe D."/>
            <person name="Capella-Gutierrez S."/>
            <person name="Zakrzewski F."/>
            <person name="Tafer H."/>
            <person name="Rupp O."/>
            <person name="Soerensen T.R."/>
            <person name="Stracke R."/>
            <person name="Reinhardt R."/>
            <person name="Goesmann A."/>
            <person name="Kraft T."/>
            <person name="Schulz B."/>
            <person name="Stadler P.F."/>
            <person name="Schmidt T."/>
            <person name="Gabaldon T."/>
            <person name="Lehrach H."/>
            <person name="Weisshaar B."/>
            <person name="Himmelbauer H."/>
        </authorList>
    </citation>
    <scope>NUCLEOTIDE SEQUENCE [LARGE SCALE GENOMIC DNA]</scope>
    <source>
        <strain>cv. Viroflay</strain>
        <tissue>Leaf</tissue>
    </source>
</reference>
<reference key="2">
    <citation type="journal article" date="2000" name="J. Biol. Chem.">
        <title>The plastid ribosomal proteins. Identification of all the proteins in the 30S subunit of an organelle ribosome (chloroplast).</title>
        <authorList>
            <person name="Yamaguchi K."/>
            <person name="von Knoblauch K."/>
            <person name="Subramanian A.R."/>
        </authorList>
    </citation>
    <scope>NUCLEOTIDE SEQUENCE [MRNA] OF 44-211</scope>
    <scope>PROTEIN SEQUENCE OF 66-100; 119-130 AND 139-150</scope>
    <scope>SUBUNIT</scope>
    <scope>SUBCELLULAR LOCATION</scope>
    <scope>MASS SPECTROMETRY</scope>
    <source>
        <strain>cv. Alwaro</strain>
        <tissue>Leaf</tissue>
    </source>
</reference>
<reference key="3">
    <citation type="journal article" date="2007" name="Proc. Natl. Acad. Sci. U.S.A.">
        <title>Cryo-EM study of the spinach chloroplast ribosome reveals the structural and functional roles of plastid-specific ribosomal proteins.</title>
        <authorList>
            <person name="Sharma M.R."/>
            <person name="Wilson D.N."/>
            <person name="Datta P.P."/>
            <person name="Barat C."/>
            <person name="Schluenzen F."/>
            <person name="Fucini P."/>
            <person name="Agrawal R.K."/>
        </authorList>
    </citation>
    <scope>STRUCTURE BY ELECTRON MICROSCOPY (9.4 ANGSTROMS)</scope>
</reference>
<reference key="4">
    <citation type="journal article" date="2017" name="EMBO J.">
        <title>The complete structure of the chloroplast 70S ribosome in complex with translation factor pY.</title>
        <authorList>
            <person name="Bieri P."/>
            <person name="Leibundgut M."/>
            <person name="Saurer M."/>
            <person name="Boehringer D."/>
            <person name="Ban N."/>
        </authorList>
    </citation>
    <scope>STRUCTURE BY ELECTRON MICROSCOPY (3.40 ANGSTROMS)</scope>
    <scope>SUBUNIT</scope>
    <scope>SUBCELLULAR LOCATION</scope>
</reference>
<accession>P82403</accession>
<accession>A0A0K9R0H2</accession>
<accession>P82404</accession>
<accession>P82405</accession>
<accession>P82406</accession>
<accession>P82407</accession>
<accession>Q9M4W2</accession>
<comment type="function">
    <text evidence="7 8">Component of the chloroplast ribosome (chloro-ribosome), a dedicated translation machinery responsible for the synthesis of chloroplast genome-encoded proteins, including proteins of the transcription and translation machinery and components of the photosynthetic apparatus.</text>
</comment>
<comment type="subunit">
    <text evidence="2 3">Component of the chloroplast small ribosomal subunit (SSU). Mature 70S chloroplast ribosomes of higher plants consist of a small (30S) and a large (50S) subunit. The 30S small subunit contains 1 molecule of ribosomal RNA (16S rRNA) and 24 different proteins. The 50S large subunit contains 3 rRNA molecules (23S, 5S and 4.5S rRNA) and 33 different proteins.</text>
</comment>
<comment type="subcellular location">
    <subcellularLocation>
        <location evidence="2 3">Plastid</location>
        <location evidence="2 3">Chloroplast</location>
    </subcellularLocation>
</comment>
<comment type="mass spectrometry">
    <molecule>Small ribosomal subunit protein bS6c alpha</molecule>
    <text>S6 alpha form.</text>
</comment>
<comment type="mass spectrometry">
    <molecule>Small ribosomal subunit protein bS6c beta</molecule>
    <text>S6 beta form.</text>
</comment>
<comment type="mass spectrometry">
    <molecule>Small ribosomal subunit protein bS6c epsilon</molecule>
    <text>S6 epsilon form.</text>
</comment>
<comment type="mass spectrometry">
    <molecule>Small ribosomal subunit protein bS6c alpha</molecule>
    <text>S6 alpha form.</text>
</comment>
<comment type="mass spectrometry">
    <molecule>Small ribosomal subunit protein bS6c beta</molecule>
    <text>S6 beta form.</text>
</comment>
<comment type="mass spectrometry">
    <molecule>Small ribosomal subunit protein bS6c epsilon</molecule>
    <text>S6 epsilon form.</text>
</comment>
<comment type="miscellaneous">
    <text evidence="2">5 different forms exist, S6 alpha, S6 beta, S6 gamma, S6 delta and S6 epsilon, possibly due to different transit peptide cleavage.</text>
</comment>
<comment type="similarity">
    <text evidence="6">Belongs to the bacterial ribosomal protein bS6 family.</text>
</comment>
<protein>
    <recommendedName>
        <fullName evidence="5">Small ribosomal subunit protein bS6c alpha</fullName>
    </recommendedName>
    <alternativeName>
        <fullName evidence="4">30S ribosomal protein S6, chloroplastic</fullName>
    </alternativeName>
    <component>
        <recommendedName>
            <fullName evidence="4">Small ribosomal subunit protein bS6c beta</fullName>
        </recommendedName>
    </component>
    <component>
        <recommendedName>
            <fullName evidence="4">Small ribosomal subunit protein bS6c gamma</fullName>
        </recommendedName>
    </component>
    <component>
        <recommendedName>
            <fullName evidence="4">Small ribosomal subunit protein bS6c delta</fullName>
        </recommendedName>
    </component>
    <component>
        <recommendedName>
            <fullName evidence="4">Small ribosomal subunit protein bS6c epsilon</fullName>
        </recommendedName>
    </component>
</protein>
<organism>
    <name type="scientific">Spinacia oleracea</name>
    <name type="common">Spinach</name>
    <dbReference type="NCBI Taxonomy" id="3562"/>
    <lineage>
        <taxon>Eukaryota</taxon>
        <taxon>Viridiplantae</taxon>
        <taxon>Streptophyta</taxon>
        <taxon>Embryophyta</taxon>
        <taxon>Tracheophyta</taxon>
        <taxon>Spermatophyta</taxon>
        <taxon>Magnoliopsida</taxon>
        <taxon>eudicotyledons</taxon>
        <taxon>Gunneridae</taxon>
        <taxon>Pentapetalae</taxon>
        <taxon>Caryophyllales</taxon>
        <taxon>Chenopodiaceae</taxon>
        <taxon>Chenopodioideae</taxon>
        <taxon>Anserineae</taxon>
        <taxon>Spinacia</taxon>
    </lineage>
</organism>
<proteinExistence type="evidence at protein level"/>
<gene>
    <name type="primary">RPS6</name>
    <name type="ORF">SOVF_120630</name>
</gene>
<feature type="transit peptide" description="Chloroplast" evidence="2">
    <location>
        <begin position="1"/>
        <end position="65"/>
    </location>
</feature>
<feature type="chain" id="PRO_0000250217" description="Small ribosomal subunit protein bS6c alpha">
    <location>
        <begin position="66"/>
        <end position="211"/>
    </location>
</feature>
<feature type="chain" id="PRO_0000250218" description="Small ribosomal subunit protein bS6c beta">
    <location>
        <begin position="71"/>
        <end position="211"/>
    </location>
</feature>
<feature type="chain" id="PRO_0000250219" description="Small ribosomal subunit protein bS6c gamma">
    <location>
        <begin position="77"/>
        <end position="211"/>
    </location>
</feature>
<feature type="chain" id="PRO_0000250220" description="Small ribosomal subunit protein bS6c delta">
    <location>
        <begin position="86"/>
        <end position="211"/>
    </location>
</feature>
<feature type="chain" id="PRO_0000250221" description="Small ribosomal subunit protein bS6c epsilon">
    <location>
        <begin position="91"/>
        <end position="211"/>
    </location>
</feature>
<feature type="region of interest" description="Disordered" evidence="1">
    <location>
        <begin position="1"/>
        <end position="25"/>
    </location>
</feature>
<feature type="region of interest" description="Disordered" evidence="1">
    <location>
        <begin position="80"/>
        <end position="100"/>
    </location>
</feature>
<feature type="compositionally biased region" description="Low complexity" evidence="1">
    <location>
        <begin position="1"/>
        <end position="19"/>
    </location>
</feature>